<gene>
    <name evidence="1" type="primary">tbp</name>
    <name type="ordered locus">TSIB_0138</name>
</gene>
<sequence>MSNVELRIENIVASVDLFASLDLEKVIEICPHSKYNPEEFPGIICRFDEPKVALLVFSSGKLVVTGAKSVDDIQAAVSKLVEMLSKIGTKFGRAPEIDIQNMVFSGDLKMEFNLDAVALVLPNCEYEPEQFPGVIYRVKDPKAVILLFSSGKIVCSGAKSEHDAWEAVKKLLHELDKYGLIEEEA</sequence>
<evidence type="ECO:0000255" key="1">
    <source>
        <dbReference type="HAMAP-Rule" id="MF_00408"/>
    </source>
</evidence>
<accession>C6A0R1</accession>
<keyword id="KW-0238">DNA-binding</keyword>
<keyword id="KW-1185">Reference proteome</keyword>
<keyword id="KW-0677">Repeat</keyword>
<keyword id="KW-0804">Transcription</keyword>
<keyword id="KW-0805">Transcription regulation</keyword>
<protein>
    <recommendedName>
        <fullName evidence="1">TATA-box-binding protein</fullName>
    </recommendedName>
    <alternativeName>
        <fullName evidence="1">Box A-binding protein</fullName>
        <shortName evidence="1">BAP</shortName>
    </alternativeName>
    <alternativeName>
        <fullName evidence="1">TATA sequence-binding protein</fullName>
        <shortName evidence="1">TBP</shortName>
    </alternativeName>
    <alternativeName>
        <fullName evidence="1">TATA-box factor</fullName>
    </alternativeName>
</protein>
<reference key="1">
    <citation type="journal article" date="2009" name="Appl. Environ. Microbiol.">
        <title>Metabolic versatility and indigenous origin of the archaeon Thermococcus sibiricus, isolated from a siberian oil reservoir, as revealed by genome analysis.</title>
        <authorList>
            <person name="Mardanov A.V."/>
            <person name="Ravin N.V."/>
            <person name="Svetlitchnyi V.A."/>
            <person name="Beletsky A.V."/>
            <person name="Miroshnichenko M.L."/>
            <person name="Bonch-Osmolovskaya E.A."/>
            <person name="Skryabin K.G."/>
        </authorList>
    </citation>
    <scope>NUCLEOTIDE SEQUENCE [LARGE SCALE GENOMIC DNA]</scope>
    <source>
        <strain>DSM 12597 / MM 739</strain>
    </source>
</reference>
<feature type="chain" id="PRO_1000205961" description="TATA-box-binding protein">
    <location>
        <begin position="1"/>
        <end position="185"/>
    </location>
</feature>
<feature type="repeat" description="1">
    <location>
        <begin position="8"/>
        <end position="84"/>
    </location>
</feature>
<feature type="repeat" description="2">
    <location>
        <begin position="99"/>
        <end position="175"/>
    </location>
</feature>
<organism>
    <name type="scientific">Thermococcus sibiricus (strain DSM 12597 / MM 739)</name>
    <dbReference type="NCBI Taxonomy" id="604354"/>
    <lineage>
        <taxon>Archaea</taxon>
        <taxon>Methanobacteriati</taxon>
        <taxon>Methanobacteriota</taxon>
        <taxon>Thermococci</taxon>
        <taxon>Thermococcales</taxon>
        <taxon>Thermococcaceae</taxon>
        <taxon>Thermococcus</taxon>
    </lineage>
</organism>
<proteinExistence type="inferred from homology"/>
<name>TBP_THESM</name>
<comment type="function">
    <text evidence="1">General factor that plays a role in the activation of archaeal genes transcribed by RNA polymerase. Binds specifically to the TATA box promoter element which lies close to the position of transcription initiation.</text>
</comment>
<comment type="similarity">
    <text evidence="1">Belongs to the TBP family.</text>
</comment>
<dbReference type="EMBL" id="CP001463">
    <property type="protein sequence ID" value="ACS89206.1"/>
    <property type="molecule type" value="Genomic_DNA"/>
</dbReference>
<dbReference type="SMR" id="C6A0R1"/>
<dbReference type="STRING" id="604354.TSIB_0138"/>
<dbReference type="KEGG" id="tsi:TSIB_0138"/>
<dbReference type="eggNOG" id="arCOG01764">
    <property type="taxonomic scope" value="Archaea"/>
</dbReference>
<dbReference type="HOGENOM" id="CLU_060161_4_3_2"/>
<dbReference type="Proteomes" id="UP000009079">
    <property type="component" value="Chromosome"/>
</dbReference>
<dbReference type="GO" id="GO:0003677">
    <property type="term" value="F:DNA binding"/>
    <property type="evidence" value="ECO:0007669"/>
    <property type="project" value="UniProtKB-KW"/>
</dbReference>
<dbReference type="GO" id="GO:0003700">
    <property type="term" value="F:DNA-binding transcription factor activity"/>
    <property type="evidence" value="ECO:0007669"/>
    <property type="project" value="UniProtKB-UniRule"/>
</dbReference>
<dbReference type="GO" id="GO:0006352">
    <property type="term" value="P:DNA-templated transcription initiation"/>
    <property type="evidence" value="ECO:0007669"/>
    <property type="project" value="InterPro"/>
</dbReference>
<dbReference type="CDD" id="cd04518">
    <property type="entry name" value="TBP_archaea"/>
    <property type="match status" value="1"/>
</dbReference>
<dbReference type="FunFam" id="3.30.310.10:FF:000007">
    <property type="entry name" value="TATA-box-binding protein"/>
    <property type="match status" value="1"/>
</dbReference>
<dbReference type="FunFam" id="3.30.310.10:FF:000010">
    <property type="entry name" value="TATA-box-binding protein"/>
    <property type="match status" value="1"/>
</dbReference>
<dbReference type="Gene3D" id="3.30.310.10">
    <property type="entry name" value="TATA-Binding Protein"/>
    <property type="match status" value="2"/>
</dbReference>
<dbReference type="HAMAP" id="MF_00408">
    <property type="entry name" value="TATA_bind_prot_arch"/>
    <property type="match status" value="1"/>
</dbReference>
<dbReference type="InterPro" id="IPR000814">
    <property type="entry name" value="TBP"/>
</dbReference>
<dbReference type="InterPro" id="IPR033711">
    <property type="entry name" value="TBP_archaea"/>
</dbReference>
<dbReference type="InterPro" id="IPR030491">
    <property type="entry name" value="TBP_CS"/>
</dbReference>
<dbReference type="InterPro" id="IPR012295">
    <property type="entry name" value="TBP_dom_sf"/>
</dbReference>
<dbReference type="NCBIfam" id="NF001593">
    <property type="entry name" value="PRK00394.1-2"/>
    <property type="match status" value="1"/>
</dbReference>
<dbReference type="NCBIfam" id="NF001594">
    <property type="entry name" value="PRK00394.1-3"/>
    <property type="match status" value="1"/>
</dbReference>
<dbReference type="PANTHER" id="PTHR10126">
    <property type="entry name" value="TATA-BOX BINDING PROTEIN"/>
    <property type="match status" value="1"/>
</dbReference>
<dbReference type="Pfam" id="PF00352">
    <property type="entry name" value="TBP"/>
    <property type="match status" value="2"/>
</dbReference>
<dbReference type="PRINTS" id="PR00686">
    <property type="entry name" value="TIFACTORIID"/>
</dbReference>
<dbReference type="SUPFAM" id="SSF55945">
    <property type="entry name" value="TATA-box binding protein-like"/>
    <property type="match status" value="2"/>
</dbReference>
<dbReference type="PROSITE" id="PS00351">
    <property type="entry name" value="TFIID"/>
    <property type="match status" value="2"/>
</dbReference>